<gene>
    <name evidence="1" type="primary">prfA</name>
    <name type="ordered locus">MHJ_0135</name>
</gene>
<comment type="function">
    <text evidence="1">Peptide chain release factor 1 directs the termination of translation in response to the peptide chain termination codons UAG and UAA.</text>
</comment>
<comment type="subcellular location">
    <subcellularLocation>
        <location evidence="1">Cytoplasm</location>
    </subcellularLocation>
</comment>
<comment type="PTM">
    <text evidence="1">Methylated by PrmC. Methylation increases the termination efficiency of RF1.</text>
</comment>
<comment type="similarity">
    <text evidence="1">Belongs to the prokaryotic/mitochondrial release factor family.</text>
</comment>
<sequence length="361" mass="40829">MEKKMFNSLMKIHQKYQDLKQLLETDQILNDQKQYLQIAKEIASISEIIEVFQKFLDDQKVLEDAKTILIQEDDPELIQLAKVEIATMSKNIEEYEKKLLILMLPKDKNDEKDVIVEIRGAAGGDEANIFVGDLFKMYHKWADSQKAKVKVLSSSLALAGGFSQIIFQISGQKIYSKLKFESGVHRVQRVPATETMGRIHTSTATVTVMPKIDEKIEIEINPSDLKIDTYRSSGAGGQSVNTTDSAVRITHIPTGIVVTSQDERSQIGNKEIAMGILKSKIYNLELQKQQQKQSDFRKLAGSGARSEKIRTYNYPQDRLTDHRINFSTSLKPIIQGSLNPIIEALLAQEKTELILQNYANK</sequence>
<keyword id="KW-0963">Cytoplasm</keyword>
<keyword id="KW-0488">Methylation</keyword>
<keyword id="KW-0648">Protein biosynthesis</keyword>
<organism>
    <name type="scientific">Mesomycoplasma hyopneumoniae (strain J / ATCC 25934 / NCTC 10110)</name>
    <name type="common">Mycoplasma hyopneumoniae</name>
    <dbReference type="NCBI Taxonomy" id="262719"/>
    <lineage>
        <taxon>Bacteria</taxon>
        <taxon>Bacillati</taxon>
        <taxon>Mycoplasmatota</taxon>
        <taxon>Mycoplasmoidales</taxon>
        <taxon>Metamycoplasmataceae</taxon>
        <taxon>Mesomycoplasma</taxon>
    </lineage>
</organism>
<name>RF1_MESHJ</name>
<reference key="1">
    <citation type="journal article" date="2005" name="J. Bacteriol.">
        <title>Swine and poultry pathogens: the complete genome sequences of two strains of Mycoplasma hyopneumoniae and a strain of Mycoplasma synoviae.</title>
        <authorList>
            <person name="Vasconcelos A.T.R."/>
            <person name="Ferreira H.B."/>
            <person name="Bizarro C.V."/>
            <person name="Bonatto S.L."/>
            <person name="Carvalho M.O."/>
            <person name="Pinto P.M."/>
            <person name="Almeida D.F."/>
            <person name="Almeida L.G.P."/>
            <person name="Almeida R."/>
            <person name="Alves-Junior L."/>
            <person name="Assuncao E.N."/>
            <person name="Azevedo V.A.C."/>
            <person name="Bogo M.R."/>
            <person name="Brigido M.M."/>
            <person name="Brocchi M."/>
            <person name="Burity H.A."/>
            <person name="Camargo A.A."/>
            <person name="Camargo S.S."/>
            <person name="Carepo M.S."/>
            <person name="Carraro D.M."/>
            <person name="de Mattos Cascardo J.C."/>
            <person name="Castro L.A."/>
            <person name="Cavalcanti G."/>
            <person name="Chemale G."/>
            <person name="Collevatti R.G."/>
            <person name="Cunha C.W."/>
            <person name="Dallagiovanna B."/>
            <person name="Dambros B.P."/>
            <person name="Dellagostin O.A."/>
            <person name="Falcao C."/>
            <person name="Fantinatti-Garboggini F."/>
            <person name="Felipe M.S.S."/>
            <person name="Fiorentin L."/>
            <person name="Franco G.R."/>
            <person name="Freitas N.S.A."/>
            <person name="Frias D."/>
            <person name="Grangeiro T.B."/>
            <person name="Grisard E.C."/>
            <person name="Guimaraes C.T."/>
            <person name="Hungria M."/>
            <person name="Jardim S.N."/>
            <person name="Krieger M.A."/>
            <person name="Laurino J.P."/>
            <person name="Lima L.F.A."/>
            <person name="Lopes M.I."/>
            <person name="Loreto E.L.S."/>
            <person name="Madeira H.M.F."/>
            <person name="Manfio G.P."/>
            <person name="Maranhao A.Q."/>
            <person name="Martinkovics C.T."/>
            <person name="Medeiros S.R.B."/>
            <person name="Moreira M.A.M."/>
            <person name="Neiva M."/>
            <person name="Ramalho-Neto C.E."/>
            <person name="Nicolas M.F."/>
            <person name="Oliveira S.C."/>
            <person name="Paixao R.F.C."/>
            <person name="Pedrosa F.O."/>
            <person name="Pena S.D.J."/>
            <person name="Pereira M."/>
            <person name="Pereira-Ferrari L."/>
            <person name="Piffer I."/>
            <person name="Pinto L.S."/>
            <person name="Potrich D.P."/>
            <person name="Salim A.C.M."/>
            <person name="Santos F.R."/>
            <person name="Schmitt R."/>
            <person name="Schneider M.P.C."/>
            <person name="Schrank A."/>
            <person name="Schrank I.S."/>
            <person name="Schuck A.F."/>
            <person name="Seuanez H.N."/>
            <person name="Silva D.W."/>
            <person name="Silva R."/>
            <person name="Silva S.C."/>
            <person name="Soares C.M.A."/>
            <person name="Souza K.R.L."/>
            <person name="Souza R.C."/>
            <person name="Staats C.C."/>
            <person name="Steffens M.B.R."/>
            <person name="Teixeira S.M.R."/>
            <person name="Urmenyi T.P."/>
            <person name="Vainstein M.H."/>
            <person name="Zuccherato L.W."/>
            <person name="Simpson A.J.G."/>
            <person name="Zaha A."/>
        </authorList>
    </citation>
    <scope>NUCLEOTIDE SEQUENCE [LARGE SCALE GENOMIC DNA]</scope>
    <source>
        <strain>J / ATCC 25934 / NCTC 10110</strain>
    </source>
</reference>
<accession>Q4AAJ5</accession>
<feature type="chain" id="PRO_0000263300" description="Peptide chain release factor 1">
    <location>
        <begin position="1"/>
        <end position="361"/>
    </location>
</feature>
<feature type="modified residue" description="N5-methylglutamine" evidence="1">
    <location>
        <position position="238"/>
    </location>
</feature>
<dbReference type="EMBL" id="AE017243">
    <property type="protein sequence ID" value="AAZ44226.1"/>
    <property type="molecule type" value="Genomic_DNA"/>
</dbReference>
<dbReference type="RefSeq" id="WP_011283936.1">
    <property type="nucleotide sequence ID" value="NC_007295.1"/>
</dbReference>
<dbReference type="SMR" id="Q4AAJ5"/>
<dbReference type="GeneID" id="41334437"/>
<dbReference type="KEGG" id="mhj:MHJ_0135"/>
<dbReference type="eggNOG" id="COG0216">
    <property type="taxonomic scope" value="Bacteria"/>
</dbReference>
<dbReference type="HOGENOM" id="CLU_036856_0_1_14"/>
<dbReference type="OrthoDB" id="9806673at2"/>
<dbReference type="Proteomes" id="UP000000548">
    <property type="component" value="Chromosome"/>
</dbReference>
<dbReference type="GO" id="GO:0005737">
    <property type="term" value="C:cytoplasm"/>
    <property type="evidence" value="ECO:0007669"/>
    <property type="project" value="UniProtKB-SubCell"/>
</dbReference>
<dbReference type="GO" id="GO:0016149">
    <property type="term" value="F:translation release factor activity, codon specific"/>
    <property type="evidence" value="ECO:0007669"/>
    <property type="project" value="UniProtKB-UniRule"/>
</dbReference>
<dbReference type="FunFam" id="3.30.160.20:FF:000004">
    <property type="entry name" value="Peptide chain release factor 1"/>
    <property type="match status" value="1"/>
</dbReference>
<dbReference type="FunFam" id="3.30.70.1660:FF:000002">
    <property type="entry name" value="Peptide chain release factor 1"/>
    <property type="match status" value="1"/>
</dbReference>
<dbReference type="Gene3D" id="3.30.160.20">
    <property type="match status" value="1"/>
</dbReference>
<dbReference type="Gene3D" id="3.30.70.1660">
    <property type="match status" value="1"/>
</dbReference>
<dbReference type="Gene3D" id="6.10.140.1950">
    <property type="match status" value="1"/>
</dbReference>
<dbReference type="HAMAP" id="MF_00093">
    <property type="entry name" value="Rel_fac_1"/>
    <property type="match status" value="1"/>
</dbReference>
<dbReference type="InterPro" id="IPR005139">
    <property type="entry name" value="PCRF"/>
</dbReference>
<dbReference type="InterPro" id="IPR000352">
    <property type="entry name" value="Pep_chain_release_fac_I"/>
</dbReference>
<dbReference type="InterPro" id="IPR045853">
    <property type="entry name" value="Pep_chain_release_fac_I_sf"/>
</dbReference>
<dbReference type="InterPro" id="IPR050057">
    <property type="entry name" value="Prokaryotic/Mito_RF"/>
</dbReference>
<dbReference type="InterPro" id="IPR004373">
    <property type="entry name" value="RF-1"/>
</dbReference>
<dbReference type="NCBIfam" id="TIGR00019">
    <property type="entry name" value="prfA"/>
    <property type="match status" value="1"/>
</dbReference>
<dbReference type="NCBIfam" id="NF001859">
    <property type="entry name" value="PRK00591.1"/>
    <property type="match status" value="1"/>
</dbReference>
<dbReference type="PANTHER" id="PTHR43804">
    <property type="entry name" value="LD18447P"/>
    <property type="match status" value="1"/>
</dbReference>
<dbReference type="PANTHER" id="PTHR43804:SF7">
    <property type="entry name" value="LD18447P"/>
    <property type="match status" value="1"/>
</dbReference>
<dbReference type="Pfam" id="PF03462">
    <property type="entry name" value="PCRF"/>
    <property type="match status" value="1"/>
</dbReference>
<dbReference type="Pfam" id="PF00472">
    <property type="entry name" value="RF-1"/>
    <property type="match status" value="1"/>
</dbReference>
<dbReference type="SMART" id="SM00937">
    <property type="entry name" value="PCRF"/>
    <property type="match status" value="1"/>
</dbReference>
<dbReference type="SUPFAM" id="SSF75620">
    <property type="entry name" value="Release factor"/>
    <property type="match status" value="1"/>
</dbReference>
<dbReference type="PROSITE" id="PS00745">
    <property type="entry name" value="RF_PROK_I"/>
    <property type="match status" value="1"/>
</dbReference>
<protein>
    <recommendedName>
        <fullName evidence="1">Peptide chain release factor 1</fullName>
        <shortName evidence="1">RF-1</shortName>
    </recommendedName>
</protein>
<evidence type="ECO:0000255" key="1">
    <source>
        <dbReference type="HAMAP-Rule" id="MF_00093"/>
    </source>
</evidence>
<proteinExistence type="inferred from homology"/>